<keyword id="KW-0687">Ribonucleoprotein</keyword>
<keyword id="KW-0689">Ribosomal protein</keyword>
<keyword id="KW-0694">RNA-binding</keyword>
<keyword id="KW-0699">rRNA-binding</keyword>
<keyword id="KW-0820">tRNA-binding</keyword>
<proteinExistence type="inferred from homology"/>
<organism>
    <name type="scientific">Streptococcus pneumoniae (strain 70585)</name>
    <dbReference type="NCBI Taxonomy" id="488221"/>
    <lineage>
        <taxon>Bacteria</taxon>
        <taxon>Bacillati</taxon>
        <taxon>Bacillota</taxon>
        <taxon>Bacilli</taxon>
        <taxon>Lactobacillales</taxon>
        <taxon>Streptococcaceae</taxon>
        <taxon>Streptococcus</taxon>
    </lineage>
</organism>
<sequence>MLVPKRVKHRREFRGKMRGEAKGGKEVAFGEYGLQATTSHWITNRQIEAARIAMTRYMKRGGKVWIKIFPHKSYTAKAIGVRMGSGKGAPEGWVAPVKRGKVMFEIAGVSEEIAREALRLASHKLPVKCKFVKREAE</sequence>
<protein>
    <recommendedName>
        <fullName evidence="1">Large ribosomal subunit protein uL16</fullName>
    </recommendedName>
    <alternativeName>
        <fullName evidence="2">50S ribosomal protein L16</fullName>
    </alternativeName>
</protein>
<name>RL16_STRP7</name>
<feature type="chain" id="PRO_1000166380" description="Large ribosomal subunit protein uL16">
    <location>
        <begin position="1"/>
        <end position="137"/>
    </location>
</feature>
<gene>
    <name evidence="1" type="primary">rplP</name>
    <name type="ordered locus">SP70585_0272</name>
</gene>
<accession>C1CAL9</accession>
<evidence type="ECO:0000255" key="1">
    <source>
        <dbReference type="HAMAP-Rule" id="MF_01342"/>
    </source>
</evidence>
<evidence type="ECO:0000305" key="2"/>
<reference key="1">
    <citation type="journal article" date="2010" name="Genome Biol.">
        <title>Structure and dynamics of the pan-genome of Streptococcus pneumoniae and closely related species.</title>
        <authorList>
            <person name="Donati C."/>
            <person name="Hiller N.L."/>
            <person name="Tettelin H."/>
            <person name="Muzzi A."/>
            <person name="Croucher N.J."/>
            <person name="Angiuoli S.V."/>
            <person name="Oggioni M."/>
            <person name="Dunning Hotopp J.C."/>
            <person name="Hu F.Z."/>
            <person name="Riley D.R."/>
            <person name="Covacci A."/>
            <person name="Mitchell T.J."/>
            <person name="Bentley S.D."/>
            <person name="Kilian M."/>
            <person name="Ehrlich G.D."/>
            <person name="Rappuoli R."/>
            <person name="Moxon E.R."/>
            <person name="Masignani V."/>
        </authorList>
    </citation>
    <scope>NUCLEOTIDE SEQUENCE [LARGE SCALE GENOMIC DNA]</scope>
    <source>
        <strain>70585</strain>
    </source>
</reference>
<dbReference type="EMBL" id="CP000918">
    <property type="protein sequence ID" value="ACO16145.1"/>
    <property type="molecule type" value="Genomic_DNA"/>
</dbReference>
<dbReference type="RefSeq" id="WP_000960946.1">
    <property type="nucleotide sequence ID" value="NC_012468.1"/>
</dbReference>
<dbReference type="SMR" id="C1CAL9"/>
<dbReference type="GeneID" id="93738964"/>
<dbReference type="KEGG" id="snm:SP70585_0272"/>
<dbReference type="HOGENOM" id="CLU_078858_2_1_9"/>
<dbReference type="Proteomes" id="UP000002211">
    <property type="component" value="Chromosome"/>
</dbReference>
<dbReference type="GO" id="GO:0022625">
    <property type="term" value="C:cytosolic large ribosomal subunit"/>
    <property type="evidence" value="ECO:0007669"/>
    <property type="project" value="TreeGrafter"/>
</dbReference>
<dbReference type="GO" id="GO:0019843">
    <property type="term" value="F:rRNA binding"/>
    <property type="evidence" value="ECO:0007669"/>
    <property type="project" value="UniProtKB-UniRule"/>
</dbReference>
<dbReference type="GO" id="GO:0003735">
    <property type="term" value="F:structural constituent of ribosome"/>
    <property type="evidence" value="ECO:0007669"/>
    <property type="project" value="InterPro"/>
</dbReference>
<dbReference type="GO" id="GO:0000049">
    <property type="term" value="F:tRNA binding"/>
    <property type="evidence" value="ECO:0007669"/>
    <property type="project" value="UniProtKB-KW"/>
</dbReference>
<dbReference type="GO" id="GO:0006412">
    <property type="term" value="P:translation"/>
    <property type="evidence" value="ECO:0007669"/>
    <property type="project" value="UniProtKB-UniRule"/>
</dbReference>
<dbReference type="CDD" id="cd01433">
    <property type="entry name" value="Ribosomal_L16_L10e"/>
    <property type="match status" value="1"/>
</dbReference>
<dbReference type="FunFam" id="3.90.1170.10:FF:000001">
    <property type="entry name" value="50S ribosomal protein L16"/>
    <property type="match status" value="1"/>
</dbReference>
<dbReference type="Gene3D" id="3.90.1170.10">
    <property type="entry name" value="Ribosomal protein L10e/L16"/>
    <property type="match status" value="1"/>
</dbReference>
<dbReference type="HAMAP" id="MF_01342">
    <property type="entry name" value="Ribosomal_uL16"/>
    <property type="match status" value="1"/>
</dbReference>
<dbReference type="InterPro" id="IPR047873">
    <property type="entry name" value="Ribosomal_uL16"/>
</dbReference>
<dbReference type="InterPro" id="IPR000114">
    <property type="entry name" value="Ribosomal_uL16_bact-type"/>
</dbReference>
<dbReference type="InterPro" id="IPR020798">
    <property type="entry name" value="Ribosomal_uL16_CS"/>
</dbReference>
<dbReference type="InterPro" id="IPR016180">
    <property type="entry name" value="Ribosomal_uL16_dom"/>
</dbReference>
<dbReference type="InterPro" id="IPR036920">
    <property type="entry name" value="Ribosomal_uL16_sf"/>
</dbReference>
<dbReference type="NCBIfam" id="TIGR01164">
    <property type="entry name" value="rplP_bact"/>
    <property type="match status" value="1"/>
</dbReference>
<dbReference type="PANTHER" id="PTHR12220">
    <property type="entry name" value="50S/60S RIBOSOMAL PROTEIN L16"/>
    <property type="match status" value="1"/>
</dbReference>
<dbReference type="PANTHER" id="PTHR12220:SF13">
    <property type="entry name" value="LARGE RIBOSOMAL SUBUNIT PROTEIN UL16M"/>
    <property type="match status" value="1"/>
</dbReference>
<dbReference type="Pfam" id="PF00252">
    <property type="entry name" value="Ribosomal_L16"/>
    <property type="match status" value="1"/>
</dbReference>
<dbReference type="PRINTS" id="PR00060">
    <property type="entry name" value="RIBOSOMALL16"/>
</dbReference>
<dbReference type="SUPFAM" id="SSF54686">
    <property type="entry name" value="Ribosomal protein L16p/L10e"/>
    <property type="match status" value="1"/>
</dbReference>
<dbReference type="PROSITE" id="PS00586">
    <property type="entry name" value="RIBOSOMAL_L16_1"/>
    <property type="match status" value="1"/>
</dbReference>
<dbReference type="PROSITE" id="PS00701">
    <property type="entry name" value="RIBOSOMAL_L16_2"/>
    <property type="match status" value="1"/>
</dbReference>
<comment type="function">
    <text evidence="1">Binds 23S rRNA and is also seen to make contacts with the A and possibly P site tRNAs.</text>
</comment>
<comment type="subunit">
    <text evidence="1">Part of the 50S ribosomal subunit.</text>
</comment>
<comment type="similarity">
    <text evidence="1">Belongs to the universal ribosomal protein uL16 family.</text>
</comment>